<dbReference type="EMBL" id="BX950851">
    <property type="protein sequence ID" value="CAG76919.1"/>
    <property type="molecule type" value="Genomic_DNA"/>
</dbReference>
<dbReference type="RefSeq" id="WP_011095505.1">
    <property type="nucleotide sequence ID" value="NC_004547.2"/>
</dbReference>
<dbReference type="SMR" id="Q6CZX9"/>
<dbReference type="STRING" id="218491.ECA4022"/>
<dbReference type="GeneID" id="70909312"/>
<dbReference type="KEGG" id="eca:ECA4022"/>
<dbReference type="eggNOG" id="COG0186">
    <property type="taxonomic scope" value="Bacteria"/>
</dbReference>
<dbReference type="HOGENOM" id="CLU_073626_1_1_6"/>
<dbReference type="OrthoDB" id="9811714at2"/>
<dbReference type="Proteomes" id="UP000007966">
    <property type="component" value="Chromosome"/>
</dbReference>
<dbReference type="GO" id="GO:0022627">
    <property type="term" value="C:cytosolic small ribosomal subunit"/>
    <property type="evidence" value="ECO:0007669"/>
    <property type="project" value="TreeGrafter"/>
</dbReference>
<dbReference type="GO" id="GO:0019843">
    <property type="term" value="F:rRNA binding"/>
    <property type="evidence" value="ECO:0007669"/>
    <property type="project" value="UniProtKB-UniRule"/>
</dbReference>
<dbReference type="GO" id="GO:0003735">
    <property type="term" value="F:structural constituent of ribosome"/>
    <property type="evidence" value="ECO:0007669"/>
    <property type="project" value="InterPro"/>
</dbReference>
<dbReference type="GO" id="GO:0006412">
    <property type="term" value="P:translation"/>
    <property type="evidence" value="ECO:0007669"/>
    <property type="project" value="UniProtKB-UniRule"/>
</dbReference>
<dbReference type="CDD" id="cd00364">
    <property type="entry name" value="Ribosomal_uS17"/>
    <property type="match status" value="1"/>
</dbReference>
<dbReference type="FunFam" id="2.40.50.140:FF:000014">
    <property type="entry name" value="30S ribosomal protein S17"/>
    <property type="match status" value="1"/>
</dbReference>
<dbReference type="Gene3D" id="2.40.50.140">
    <property type="entry name" value="Nucleic acid-binding proteins"/>
    <property type="match status" value="1"/>
</dbReference>
<dbReference type="HAMAP" id="MF_01345_B">
    <property type="entry name" value="Ribosomal_uS17_B"/>
    <property type="match status" value="1"/>
</dbReference>
<dbReference type="InterPro" id="IPR012340">
    <property type="entry name" value="NA-bd_OB-fold"/>
</dbReference>
<dbReference type="InterPro" id="IPR000266">
    <property type="entry name" value="Ribosomal_uS17"/>
</dbReference>
<dbReference type="InterPro" id="IPR019984">
    <property type="entry name" value="Ribosomal_uS17_bact/chlr"/>
</dbReference>
<dbReference type="InterPro" id="IPR019979">
    <property type="entry name" value="Ribosomal_uS17_CS"/>
</dbReference>
<dbReference type="NCBIfam" id="NF004123">
    <property type="entry name" value="PRK05610.1"/>
    <property type="match status" value="1"/>
</dbReference>
<dbReference type="NCBIfam" id="TIGR03635">
    <property type="entry name" value="uS17_bact"/>
    <property type="match status" value="1"/>
</dbReference>
<dbReference type="PANTHER" id="PTHR10744">
    <property type="entry name" value="40S RIBOSOMAL PROTEIN S11 FAMILY MEMBER"/>
    <property type="match status" value="1"/>
</dbReference>
<dbReference type="PANTHER" id="PTHR10744:SF1">
    <property type="entry name" value="SMALL RIBOSOMAL SUBUNIT PROTEIN US17M"/>
    <property type="match status" value="1"/>
</dbReference>
<dbReference type="Pfam" id="PF00366">
    <property type="entry name" value="Ribosomal_S17"/>
    <property type="match status" value="1"/>
</dbReference>
<dbReference type="PRINTS" id="PR00973">
    <property type="entry name" value="RIBOSOMALS17"/>
</dbReference>
<dbReference type="SUPFAM" id="SSF50249">
    <property type="entry name" value="Nucleic acid-binding proteins"/>
    <property type="match status" value="1"/>
</dbReference>
<dbReference type="PROSITE" id="PS00056">
    <property type="entry name" value="RIBOSOMAL_S17"/>
    <property type="match status" value="1"/>
</dbReference>
<name>RS17_PECAS</name>
<keyword id="KW-1185">Reference proteome</keyword>
<keyword id="KW-0687">Ribonucleoprotein</keyword>
<keyword id="KW-0689">Ribosomal protein</keyword>
<keyword id="KW-0694">RNA-binding</keyword>
<keyword id="KW-0699">rRNA-binding</keyword>
<proteinExistence type="inferred from homology"/>
<reference key="1">
    <citation type="journal article" date="2004" name="Proc. Natl. Acad. Sci. U.S.A.">
        <title>Genome sequence of the enterobacterial phytopathogen Erwinia carotovora subsp. atroseptica and characterization of virulence factors.</title>
        <authorList>
            <person name="Bell K.S."/>
            <person name="Sebaihia M."/>
            <person name="Pritchard L."/>
            <person name="Holden M.T.G."/>
            <person name="Hyman L.J."/>
            <person name="Holeva M.C."/>
            <person name="Thomson N.R."/>
            <person name="Bentley S.D."/>
            <person name="Churcher L.J.C."/>
            <person name="Mungall K."/>
            <person name="Atkin R."/>
            <person name="Bason N."/>
            <person name="Brooks K."/>
            <person name="Chillingworth T."/>
            <person name="Clark K."/>
            <person name="Doggett J."/>
            <person name="Fraser A."/>
            <person name="Hance Z."/>
            <person name="Hauser H."/>
            <person name="Jagels K."/>
            <person name="Moule S."/>
            <person name="Norbertczak H."/>
            <person name="Ormond D."/>
            <person name="Price C."/>
            <person name="Quail M.A."/>
            <person name="Sanders M."/>
            <person name="Walker D."/>
            <person name="Whitehead S."/>
            <person name="Salmond G.P.C."/>
            <person name="Birch P.R.J."/>
            <person name="Parkhill J."/>
            <person name="Toth I.K."/>
        </authorList>
    </citation>
    <scope>NUCLEOTIDE SEQUENCE [LARGE SCALE GENOMIC DNA]</scope>
    <source>
        <strain>SCRI 1043 / ATCC BAA-672</strain>
    </source>
</reference>
<feature type="chain" id="PRO_0000233477" description="Small ribosomal subunit protein uS17">
    <location>
        <begin position="1"/>
        <end position="84"/>
    </location>
</feature>
<protein>
    <recommendedName>
        <fullName evidence="1">Small ribosomal subunit protein uS17</fullName>
    </recommendedName>
    <alternativeName>
        <fullName evidence="2">30S ribosomal protein S17</fullName>
    </alternativeName>
</protein>
<organism>
    <name type="scientific">Pectobacterium atrosepticum (strain SCRI 1043 / ATCC BAA-672)</name>
    <name type="common">Erwinia carotovora subsp. atroseptica</name>
    <dbReference type="NCBI Taxonomy" id="218491"/>
    <lineage>
        <taxon>Bacteria</taxon>
        <taxon>Pseudomonadati</taxon>
        <taxon>Pseudomonadota</taxon>
        <taxon>Gammaproteobacteria</taxon>
        <taxon>Enterobacterales</taxon>
        <taxon>Pectobacteriaceae</taxon>
        <taxon>Pectobacterium</taxon>
    </lineage>
</organism>
<accession>Q6CZX9</accession>
<comment type="function">
    <text evidence="1">One of the primary rRNA binding proteins, it binds specifically to the 5'-end of 16S ribosomal RNA.</text>
</comment>
<comment type="subunit">
    <text evidence="1">Part of the 30S ribosomal subunit.</text>
</comment>
<comment type="similarity">
    <text evidence="1">Belongs to the universal ribosomal protein uS17 family.</text>
</comment>
<evidence type="ECO:0000255" key="1">
    <source>
        <dbReference type="HAMAP-Rule" id="MF_01345"/>
    </source>
</evidence>
<evidence type="ECO:0000305" key="2"/>
<gene>
    <name evidence="1" type="primary">rpsQ</name>
    <name type="ordered locus">ECA4022</name>
</gene>
<sequence length="84" mass="9737">MTDKIRTLQGRVVSDKMEKSMVVAIERFVKHPLYGKFIKRTTKLHVHDENNECGIGDVVEIRECRPLSKTKSWTLVRVVEKAIL</sequence>